<dbReference type="EC" id="3.4.-.-"/>
<dbReference type="EMBL" id="AE014134">
    <property type="protein sequence ID" value="AAF53077.1"/>
    <property type="molecule type" value="Genomic_DNA"/>
</dbReference>
<dbReference type="EMBL" id="AY051978">
    <property type="protein sequence ID" value="AAK93402.1"/>
    <property type="molecule type" value="mRNA"/>
</dbReference>
<dbReference type="RefSeq" id="NP_609495.1">
    <property type="nucleotide sequence ID" value="NM_135651.3"/>
</dbReference>
<dbReference type="BioGRID" id="60613">
    <property type="interactions" value="3"/>
</dbReference>
<dbReference type="FunCoup" id="Q9VKJ1">
    <property type="interactions" value="285"/>
</dbReference>
<dbReference type="IntAct" id="Q9VKJ1">
    <property type="interactions" value="15"/>
</dbReference>
<dbReference type="STRING" id="7227.FBpp0079789"/>
<dbReference type="GlyGen" id="Q9VKJ1">
    <property type="glycosylation" value="3 sites"/>
</dbReference>
<dbReference type="iPTMnet" id="Q9VKJ1"/>
<dbReference type="PaxDb" id="7227-FBpp0079789"/>
<dbReference type="DNASU" id="34551"/>
<dbReference type="EnsemblMetazoa" id="FBtr0080200">
    <property type="protein sequence ID" value="FBpp0079789"/>
    <property type="gene ID" value="FBgn0032348"/>
</dbReference>
<dbReference type="GeneID" id="34551"/>
<dbReference type="KEGG" id="dme:Dmel_CG4751"/>
<dbReference type="UCSC" id="CG4751-RA">
    <property type="organism name" value="d. melanogaster"/>
</dbReference>
<dbReference type="AGR" id="FB:FBgn0032348"/>
<dbReference type="FlyBase" id="FBgn0032348">
    <property type="gene designation" value="CG4751"/>
</dbReference>
<dbReference type="VEuPathDB" id="VectorBase:FBgn0032348"/>
<dbReference type="eggNOG" id="KOG1555">
    <property type="taxonomic scope" value="Eukaryota"/>
</dbReference>
<dbReference type="HOGENOM" id="CLU_005253_0_0_1"/>
<dbReference type="InParanoid" id="Q9VKJ1"/>
<dbReference type="OMA" id="KRMEFAS"/>
<dbReference type="OrthoDB" id="167806at2759"/>
<dbReference type="PhylomeDB" id="Q9VKJ1"/>
<dbReference type="BioGRID-ORCS" id="34551">
    <property type="hits" value="0 hits in 1 CRISPR screen"/>
</dbReference>
<dbReference type="GenomeRNAi" id="34551"/>
<dbReference type="PRO" id="PR:Q9VKJ1"/>
<dbReference type="Proteomes" id="UP000000803">
    <property type="component" value="Chromosome 2L"/>
</dbReference>
<dbReference type="Bgee" id="FBgn0032348">
    <property type="expression patterns" value="Expressed in eye disc (Drosophila) and 54 other cell types or tissues"/>
</dbReference>
<dbReference type="GO" id="GO:0005730">
    <property type="term" value="C:nucleolus"/>
    <property type="evidence" value="ECO:0000318"/>
    <property type="project" value="GO_Central"/>
</dbReference>
<dbReference type="GO" id="GO:0005654">
    <property type="term" value="C:nucleoplasm"/>
    <property type="evidence" value="ECO:0000318"/>
    <property type="project" value="GO_Central"/>
</dbReference>
<dbReference type="GO" id="GO:0046872">
    <property type="term" value="F:metal ion binding"/>
    <property type="evidence" value="ECO:0007669"/>
    <property type="project" value="UniProtKB-KW"/>
</dbReference>
<dbReference type="GO" id="GO:0140492">
    <property type="term" value="F:metal-dependent deubiquitinase activity"/>
    <property type="evidence" value="ECO:0000303"/>
    <property type="project" value="FlyBase"/>
</dbReference>
<dbReference type="GO" id="GO:0006508">
    <property type="term" value="P:proteolysis"/>
    <property type="evidence" value="ECO:0007669"/>
    <property type="project" value="UniProtKB-KW"/>
</dbReference>
<dbReference type="CDD" id="cd08067">
    <property type="entry name" value="MPN_2A_DUB"/>
    <property type="match status" value="1"/>
</dbReference>
<dbReference type="FunFam" id="3.40.140.10:FF:000053">
    <property type="entry name" value="MPN domain-containing protein CG4751"/>
    <property type="match status" value="1"/>
</dbReference>
<dbReference type="Gene3D" id="3.40.140.10">
    <property type="entry name" value="Cytidine Deaminase, domain 2"/>
    <property type="match status" value="1"/>
</dbReference>
<dbReference type="InterPro" id="IPR000555">
    <property type="entry name" value="JAMM/MPN+_dom"/>
</dbReference>
<dbReference type="InterPro" id="IPR050242">
    <property type="entry name" value="JAMM_MPN+_peptidase_M67A"/>
</dbReference>
<dbReference type="InterPro" id="IPR037518">
    <property type="entry name" value="MPN"/>
</dbReference>
<dbReference type="InterPro" id="IPR040843">
    <property type="entry name" value="RAMA"/>
</dbReference>
<dbReference type="PANTHER" id="PTHR10410">
    <property type="entry name" value="EUKARYOTIC TRANSLATION INITIATION FACTOR 3 -RELATED"/>
    <property type="match status" value="1"/>
</dbReference>
<dbReference type="Pfam" id="PF01398">
    <property type="entry name" value="JAB"/>
    <property type="match status" value="1"/>
</dbReference>
<dbReference type="Pfam" id="PF18755">
    <property type="entry name" value="RAMA"/>
    <property type="match status" value="1"/>
</dbReference>
<dbReference type="SUPFAM" id="SSF102712">
    <property type="entry name" value="JAB1/MPN domain"/>
    <property type="match status" value="1"/>
</dbReference>
<dbReference type="PROSITE" id="PS50249">
    <property type="entry name" value="MPN"/>
    <property type="match status" value="1"/>
</dbReference>
<keyword id="KW-0175">Coiled coil</keyword>
<keyword id="KW-0378">Hydrolase</keyword>
<keyword id="KW-0479">Metal-binding</keyword>
<keyword id="KW-0482">Metalloprotease</keyword>
<keyword id="KW-0597">Phosphoprotein</keyword>
<keyword id="KW-0645">Protease</keyword>
<keyword id="KW-1185">Reference proteome</keyword>
<keyword id="KW-0862">Zinc</keyword>
<feature type="chain" id="PRO_0000278807" description="MPN domain-containing protein CG4751">
    <location>
        <begin position="1"/>
        <end position="1412"/>
    </location>
</feature>
<feature type="domain" description="RAMA" evidence="2">
    <location>
        <begin position="113"/>
        <end position="219"/>
    </location>
</feature>
<feature type="domain" description="MPN" evidence="3">
    <location>
        <begin position="284"/>
        <end position="420"/>
    </location>
</feature>
<feature type="region of interest" description="Disordered" evidence="4">
    <location>
        <begin position="1"/>
        <end position="123"/>
    </location>
</feature>
<feature type="region of interest" description="Disordered" evidence="4">
    <location>
        <begin position="554"/>
        <end position="589"/>
    </location>
</feature>
<feature type="region of interest" description="Disordered" evidence="4">
    <location>
        <begin position="669"/>
        <end position="734"/>
    </location>
</feature>
<feature type="region of interest" description="Disordered" evidence="4">
    <location>
        <begin position="853"/>
        <end position="891"/>
    </location>
</feature>
<feature type="region of interest" description="Disordered" evidence="4">
    <location>
        <begin position="1027"/>
        <end position="1066"/>
    </location>
</feature>
<feature type="region of interest" description="Disordered" evidence="4">
    <location>
        <begin position="1271"/>
        <end position="1318"/>
    </location>
</feature>
<feature type="region of interest" description="Disordered" evidence="4">
    <location>
        <begin position="1330"/>
        <end position="1376"/>
    </location>
</feature>
<feature type="region of interest" description="Disordered" evidence="4">
    <location>
        <begin position="1389"/>
        <end position="1412"/>
    </location>
</feature>
<feature type="coiled-coil region" evidence="2">
    <location>
        <begin position="572"/>
        <end position="600"/>
    </location>
</feature>
<feature type="compositionally biased region" description="Basic and acidic residues" evidence="4">
    <location>
        <begin position="1"/>
        <end position="10"/>
    </location>
</feature>
<feature type="compositionally biased region" description="Acidic residues" evidence="4">
    <location>
        <begin position="23"/>
        <end position="35"/>
    </location>
</feature>
<feature type="compositionally biased region" description="Acidic residues" evidence="4">
    <location>
        <begin position="103"/>
        <end position="114"/>
    </location>
</feature>
<feature type="compositionally biased region" description="Polar residues" evidence="4">
    <location>
        <begin position="702"/>
        <end position="720"/>
    </location>
</feature>
<feature type="compositionally biased region" description="Low complexity" evidence="4">
    <location>
        <begin position="873"/>
        <end position="891"/>
    </location>
</feature>
<feature type="compositionally biased region" description="Low complexity" evidence="4">
    <location>
        <begin position="1036"/>
        <end position="1066"/>
    </location>
</feature>
<feature type="compositionally biased region" description="Polar residues" evidence="4">
    <location>
        <begin position="1275"/>
        <end position="1290"/>
    </location>
</feature>
<feature type="compositionally biased region" description="Low complexity" evidence="4">
    <location>
        <begin position="1360"/>
        <end position="1370"/>
    </location>
</feature>
<feature type="binding site" evidence="3">
    <location>
        <position position="361"/>
    </location>
    <ligand>
        <name>Zn(2+)</name>
        <dbReference type="ChEBI" id="CHEBI:29105"/>
        <note>catalytic</note>
    </ligand>
</feature>
<feature type="binding site" evidence="3">
    <location>
        <position position="363"/>
    </location>
    <ligand>
        <name>Zn(2+)</name>
        <dbReference type="ChEBI" id="CHEBI:29105"/>
        <note>catalytic</note>
    </ligand>
</feature>
<feature type="binding site" evidence="3">
    <location>
        <position position="374"/>
    </location>
    <ligand>
        <name>Zn(2+)</name>
        <dbReference type="ChEBI" id="CHEBI:29105"/>
        <note>catalytic</note>
    </ligand>
</feature>
<feature type="modified residue" description="Phosphoserine" evidence="5">
    <location>
        <position position="699"/>
    </location>
</feature>
<feature type="modified residue" description="Phosphoserine" evidence="5">
    <location>
        <position position="701"/>
    </location>
</feature>
<feature type="modified residue" description="Phosphoserine" evidence="5">
    <location>
        <position position="705"/>
    </location>
</feature>
<feature type="modified residue" description="Phosphoserine" evidence="5">
    <location>
        <position position="719"/>
    </location>
</feature>
<feature type="modified residue" description="Phosphoserine" evidence="5">
    <location>
        <position position="723"/>
    </location>
</feature>
<feature type="modified residue" description="Phosphoserine" evidence="5">
    <location>
        <position position="728"/>
    </location>
</feature>
<feature type="modified residue" description="Phosphoserine" evidence="5">
    <location>
        <position position="1288"/>
    </location>
</feature>
<feature type="modified residue" description="Phosphoserine" evidence="5">
    <location>
        <position position="1290"/>
    </location>
</feature>
<feature type="modified residue" description="Phosphothreonine" evidence="5">
    <location>
        <position position="1297"/>
    </location>
</feature>
<accession>Q9VKJ1</accession>
<reference key="1">
    <citation type="journal article" date="2000" name="Science">
        <title>The genome sequence of Drosophila melanogaster.</title>
        <authorList>
            <person name="Adams M.D."/>
            <person name="Celniker S.E."/>
            <person name="Holt R.A."/>
            <person name="Evans C.A."/>
            <person name="Gocayne J.D."/>
            <person name="Amanatides P.G."/>
            <person name="Scherer S.E."/>
            <person name="Li P.W."/>
            <person name="Hoskins R.A."/>
            <person name="Galle R.F."/>
            <person name="George R.A."/>
            <person name="Lewis S.E."/>
            <person name="Richards S."/>
            <person name="Ashburner M."/>
            <person name="Henderson S.N."/>
            <person name="Sutton G.G."/>
            <person name="Wortman J.R."/>
            <person name="Yandell M.D."/>
            <person name="Zhang Q."/>
            <person name="Chen L.X."/>
            <person name="Brandon R.C."/>
            <person name="Rogers Y.-H.C."/>
            <person name="Blazej R.G."/>
            <person name="Champe M."/>
            <person name="Pfeiffer B.D."/>
            <person name="Wan K.H."/>
            <person name="Doyle C."/>
            <person name="Baxter E.G."/>
            <person name="Helt G."/>
            <person name="Nelson C.R."/>
            <person name="Miklos G.L.G."/>
            <person name="Abril J.F."/>
            <person name="Agbayani A."/>
            <person name="An H.-J."/>
            <person name="Andrews-Pfannkoch C."/>
            <person name="Baldwin D."/>
            <person name="Ballew R.M."/>
            <person name="Basu A."/>
            <person name="Baxendale J."/>
            <person name="Bayraktaroglu L."/>
            <person name="Beasley E.M."/>
            <person name="Beeson K.Y."/>
            <person name="Benos P.V."/>
            <person name="Berman B.P."/>
            <person name="Bhandari D."/>
            <person name="Bolshakov S."/>
            <person name="Borkova D."/>
            <person name="Botchan M.R."/>
            <person name="Bouck J."/>
            <person name="Brokstein P."/>
            <person name="Brottier P."/>
            <person name="Burtis K.C."/>
            <person name="Busam D.A."/>
            <person name="Butler H."/>
            <person name="Cadieu E."/>
            <person name="Center A."/>
            <person name="Chandra I."/>
            <person name="Cherry J.M."/>
            <person name="Cawley S."/>
            <person name="Dahlke C."/>
            <person name="Davenport L.B."/>
            <person name="Davies P."/>
            <person name="de Pablos B."/>
            <person name="Delcher A."/>
            <person name="Deng Z."/>
            <person name="Mays A.D."/>
            <person name="Dew I."/>
            <person name="Dietz S.M."/>
            <person name="Dodson K."/>
            <person name="Doup L.E."/>
            <person name="Downes M."/>
            <person name="Dugan-Rocha S."/>
            <person name="Dunkov B.C."/>
            <person name="Dunn P."/>
            <person name="Durbin K.J."/>
            <person name="Evangelista C.C."/>
            <person name="Ferraz C."/>
            <person name="Ferriera S."/>
            <person name="Fleischmann W."/>
            <person name="Fosler C."/>
            <person name="Gabrielian A.E."/>
            <person name="Garg N.S."/>
            <person name="Gelbart W.M."/>
            <person name="Glasser K."/>
            <person name="Glodek A."/>
            <person name="Gong F."/>
            <person name="Gorrell J.H."/>
            <person name="Gu Z."/>
            <person name="Guan P."/>
            <person name="Harris M."/>
            <person name="Harris N.L."/>
            <person name="Harvey D.A."/>
            <person name="Heiman T.J."/>
            <person name="Hernandez J.R."/>
            <person name="Houck J."/>
            <person name="Hostin D."/>
            <person name="Houston K.A."/>
            <person name="Howland T.J."/>
            <person name="Wei M.-H."/>
            <person name="Ibegwam C."/>
            <person name="Jalali M."/>
            <person name="Kalush F."/>
            <person name="Karpen G.H."/>
            <person name="Ke Z."/>
            <person name="Kennison J.A."/>
            <person name="Ketchum K.A."/>
            <person name="Kimmel B.E."/>
            <person name="Kodira C.D."/>
            <person name="Kraft C.L."/>
            <person name="Kravitz S."/>
            <person name="Kulp D."/>
            <person name="Lai Z."/>
            <person name="Lasko P."/>
            <person name="Lei Y."/>
            <person name="Levitsky A.A."/>
            <person name="Li J.H."/>
            <person name="Li Z."/>
            <person name="Liang Y."/>
            <person name="Lin X."/>
            <person name="Liu X."/>
            <person name="Mattei B."/>
            <person name="McIntosh T.C."/>
            <person name="McLeod M.P."/>
            <person name="McPherson D."/>
            <person name="Merkulov G."/>
            <person name="Milshina N.V."/>
            <person name="Mobarry C."/>
            <person name="Morris J."/>
            <person name="Moshrefi A."/>
            <person name="Mount S.M."/>
            <person name="Moy M."/>
            <person name="Murphy B."/>
            <person name="Murphy L."/>
            <person name="Muzny D.M."/>
            <person name="Nelson D.L."/>
            <person name="Nelson D.R."/>
            <person name="Nelson K.A."/>
            <person name="Nixon K."/>
            <person name="Nusskern D.R."/>
            <person name="Pacleb J.M."/>
            <person name="Palazzolo M."/>
            <person name="Pittman G.S."/>
            <person name="Pan S."/>
            <person name="Pollard J."/>
            <person name="Puri V."/>
            <person name="Reese M.G."/>
            <person name="Reinert K."/>
            <person name="Remington K."/>
            <person name="Saunders R.D.C."/>
            <person name="Scheeler F."/>
            <person name="Shen H."/>
            <person name="Shue B.C."/>
            <person name="Siden-Kiamos I."/>
            <person name="Simpson M."/>
            <person name="Skupski M.P."/>
            <person name="Smith T.J."/>
            <person name="Spier E."/>
            <person name="Spradling A.C."/>
            <person name="Stapleton M."/>
            <person name="Strong R."/>
            <person name="Sun E."/>
            <person name="Svirskas R."/>
            <person name="Tector C."/>
            <person name="Turner R."/>
            <person name="Venter E."/>
            <person name="Wang A.H."/>
            <person name="Wang X."/>
            <person name="Wang Z.-Y."/>
            <person name="Wassarman D.A."/>
            <person name="Weinstock G.M."/>
            <person name="Weissenbach J."/>
            <person name="Williams S.M."/>
            <person name="Woodage T."/>
            <person name="Worley K.C."/>
            <person name="Wu D."/>
            <person name="Yang S."/>
            <person name="Yao Q.A."/>
            <person name="Ye J."/>
            <person name="Yeh R.-F."/>
            <person name="Zaveri J.S."/>
            <person name="Zhan M."/>
            <person name="Zhang G."/>
            <person name="Zhao Q."/>
            <person name="Zheng L."/>
            <person name="Zheng X.H."/>
            <person name="Zhong F.N."/>
            <person name="Zhong W."/>
            <person name="Zhou X."/>
            <person name="Zhu S.C."/>
            <person name="Zhu X."/>
            <person name="Smith H.O."/>
            <person name="Gibbs R.A."/>
            <person name="Myers E.W."/>
            <person name="Rubin G.M."/>
            <person name="Venter J.C."/>
        </authorList>
    </citation>
    <scope>NUCLEOTIDE SEQUENCE [LARGE SCALE GENOMIC DNA]</scope>
    <source>
        <strain>Berkeley</strain>
    </source>
</reference>
<reference key="2">
    <citation type="journal article" date="2002" name="Genome Biol.">
        <title>Annotation of the Drosophila melanogaster euchromatic genome: a systematic review.</title>
        <authorList>
            <person name="Misra S."/>
            <person name="Crosby M.A."/>
            <person name="Mungall C.J."/>
            <person name="Matthews B.B."/>
            <person name="Campbell K.S."/>
            <person name="Hradecky P."/>
            <person name="Huang Y."/>
            <person name="Kaminker J.S."/>
            <person name="Millburn G.H."/>
            <person name="Prochnik S.E."/>
            <person name="Smith C.D."/>
            <person name="Tupy J.L."/>
            <person name="Whitfield E.J."/>
            <person name="Bayraktaroglu L."/>
            <person name="Berman B.P."/>
            <person name="Bettencourt B.R."/>
            <person name="Celniker S.E."/>
            <person name="de Grey A.D.N.J."/>
            <person name="Drysdale R.A."/>
            <person name="Harris N.L."/>
            <person name="Richter J."/>
            <person name="Russo S."/>
            <person name="Schroeder A.J."/>
            <person name="Shu S.Q."/>
            <person name="Stapleton M."/>
            <person name="Yamada C."/>
            <person name="Ashburner M."/>
            <person name="Gelbart W.M."/>
            <person name="Rubin G.M."/>
            <person name="Lewis S.E."/>
        </authorList>
    </citation>
    <scope>GENOME REANNOTATION</scope>
    <source>
        <strain>Berkeley</strain>
    </source>
</reference>
<reference key="3">
    <citation type="journal article" date="2002" name="Genome Biol.">
        <title>A Drosophila full-length cDNA resource.</title>
        <authorList>
            <person name="Stapleton M."/>
            <person name="Carlson J.W."/>
            <person name="Brokstein P."/>
            <person name="Yu C."/>
            <person name="Champe M."/>
            <person name="George R.A."/>
            <person name="Guarin H."/>
            <person name="Kronmiller B."/>
            <person name="Pacleb J.M."/>
            <person name="Park S."/>
            <person name="Wan K.H."/>
            <person name="Rubin G.M."/>
            <person name="Celniker S.E."/>
        </authorList>
    </citation>
    <scope>NUCLEOTIDE SEQUENCE [LARGE SCALE MRNA]</scope>
    <source>
        <strain>Berkeley</strain>
        <tissue>Embryo</tissue>
    </source>
</reference>
<reference key="4">
    <citation type="journal article" date="2008" name="J. Proteome Res.">
        <title>Phosphoproteome analysis of Drosophila melanogaster embryos.</title>
        <authorList>
            <person name="Zhai B."/>
            <person name="Villen J."/>
            <person name="Beausoleil S.A."/>
            <person name="Mintseris J."/>
            <person name="Gygi S.P."/>
        </authorList>
    </citation>
    <scope>PHOSPHORYLATION [LARGE SCALE ANALYSIS] AT SER-699; SER-701; SER-705; SER-719; SER-723; SER-728; SER-1288; SER-1290 AND THR-1297</scope>
    <scope>IDENTIFICATION BY MASS SPECTROMETRY</scope>
    <source>
        <tissue>Embryo</tissue>
    </source>
</reference>
<gene>
    <name type="ORF">CG4751</name>
</gene>
<organism>
    <name type="scientific">Drosophila melanogaster</name>
    <name type="common">Fruit fly</name>
    <dbReference type="NCBI Taxonomy" id="7227"/>
    <lineage>
        <taxon>Eukaryota</taxon>
        <taxon>Metazoa</taxon>
        <taxon>Ecdysozoa</taxon>
        <taxon>Arthropoda</taxon>
        <taxon>Hexapoda</taxon>
        <taxon>Insecta</taxon>
        <taxon>Pterygota</taxon>
        <taxon>Neoptera</taxon>
        <taxon>Endopterygota</taxon>
        <taxon>Diptera</taxon>
        <taxon>Brachycera</taxon>
        <taxon>Muscomorpha</taxon>
        <taxon>Ephydroidea</taxon>
        <taxon>Drosophilidae</taxon>
        <taxon>Drosophila</taxon>
        <taxon>Sophophora</taxon>
    </lineage>
</organism>
<proteinExistence type="evidence at protein level"/>
<evidence type="ECO:0000250" key="1"/>
<evidence type="ECO:0000255" key="2"/>
<evidence type="ECO:0000255" key="3">
    <source>
        <dbReference type="PROSITE-ProRule" id="PRU01182"/>
    </source>
</evidence>
<evidence type="ECO:0000256" key="4">
    <source>
        <dbReference type="SAM" id="MobiDB-lite"/>
    </source>
</evidence>
<evidence type="ECO:0000269" key="5">
    <source>
    </source>
</evidence>
<evidence type="ECO:0000305" key="6"/>
<comment type="function">
    <text evidence="1">Probable protease.</text>
</comment>
<comment type="domain">
    <text evidence="1">The JAMM motif may mediate the protease activity.</text>
</comment>
<comment type="similarity">
    <text evidence="6">Belongs to the peptidase M67 family.</text>
</comment>
<name>MPND_DROME</name>
<protein>
    <recommendedName>
        <fullName>MPN domain-containing protein CG4751</fullName>
        <ecNumber>3.4.-.-</ecNumber>
    </recommendedName>
</protein>
<sequence>MENGVEHGVDESGENQVLSSSDGEGDCDGDGEVEGEVLQPPPPPPLQITNDCVGEGVQAEEGERAPATTGAVDVTPDPGPPPTDGAAPVAILEDNMCDKDVDSDAGDEDNDDETKENYEGFNGTGRTVTLQTLMAANVLQPGLGLMTIEYLGQKFVGDLLADGKIKSHETETIFLTPSAWAMHCKRIINPDKKSGCGWASVKYKGKKLDAYKNTYLRKCALQKETPLDDCELDAERKTDTPEIVVKRTVFAHNTVSNRNVVHDANMLIESVPFTSVGKLQPFLITVNSSALLLADFHCHLTVREVCGYLGGTWDMNTHTLSITKTYPCRSTRFDRQRAGEVERDIQKMMIQDQLLLVGWYHSHPKFQAEPTLRDCDAQLDYQIKMRGASDLTYTPCVSLIISPYYDENPTLESVVKCIWIVPPNENRQSMEYGRPMLMQYSVLPDKEIPEEVRSEIQLCVDYYSQYRSEMVKFRNIYNNDVTYNEKLKNTLYPKFPSKQSDKALWNWICAVLDCEQEDDFIPPKTIKIIDNDDLEVKEEDKPVVLMDLSGDVKINPPKEEQFSEAMGGLEDSGRKAEEESNAQAEQKASELKVMSLQEQLCMPSGLNMNPVRMLSPLATPNPTSLPPVLPNLGAPVLPATPSQLLPPQVPAVTAPPAITPAVTTSALTSALNASPRDSPITIQSNSASPAKFEVPVRASPSPAKSDTSSHASTSRTRNSPAPSPGKFSVSDIARNSPSITPNKYEAAAAALVPPAAACLPTANDLMAASLAQLAGQLPPNFLQGDLAALFQQQRKDYGSSSLNQLAAAAAKVGGSKQSNASASSGLNDPNVAAAVAAYSNSFNMPLPTGVGIGGSGNSNAHSSSKSKSERSSKSSSSSSSSNSSSTSNSYKTKLMKELDELKNDPLKMSELIRSPEYAALLLQQAEALGATTLGTLGFGSDYSYLTGAGLGVPAANALTGGQSSNSSSSKSSKSSPAAAAAAALSADYNNLIQASKLLGYDSYMQQSKQSNDLNAFLQQQMAVAAASIPPPPQTASSGSSNSSSSKKQQQLQQQQHQQQQQQQQQQAAAQADYTALLQTYTKLFDPNNQFAAAMSSNKHMAGAHNELSALLSSGVGVGGGASGGGSKQKQKDIQSDMLNQLLQLEKQDSEIKALLYRQNKAAADLDALFATPSGAVVGAGSSANAMKSGSSAGNSGVSGMSSPSSLSNQAAYYNALAQEKMQDYAAFFQQQHGKYGIPDPLSKTTLAANNMFMTPSALFKIQQESLSAMMMKPPKSTTPSSARTRESSASPALERLTPTKSASSGGSGGGGSNSNSGGKYNFSAVDLAISSVPSNTPSPAPSDGSSGSSHRRPSPDIGRLYGELAPPGALLGSGGVPKKRMEFASVADLAAPPPAKMPKNNMGDDILNLSHD</sequence>